<keyword id="KW-0121">Carboxypeptidase</keyword>
<keyword id="KW-1015">Disulfide bond</keyword>
<keyword id="KW-0378">Hydrolase</keyword>
<keyword id="KW-0479">Metal-binding</keyword>
<keyword id="KW-0482">Metalloprotease</keyword>
<keyword id="KW-0645">Protease</keyword>
<keyword id="KW-1185">Reference proteome</keyword>
<keyword id="KW-0964">Secreted</keyword>
<keyword id="KW-0732">Signal</keyword>
<keyword id="KW-0862">Zinc</keyword>
<keyword id="KW-0865">Zymogen</keyword>
<protein>
    <recommendedName>
        <fullName>Carboxypeptidase A1</fullName>
        <ecNumber evidence="3">3.4.17.1</ecNumber>
    </recommendedName>
</protein>
<comment type="function">
    <text evidence="3">Carboxypeptidase that catalyzes the release of a C-terminal amino acid, but has little or no action with -Asp, -Glu, -Arg, -Lys or -Pro.</text>
</comment>
<comment type="catalytic activity">
    <reaction evidence="3">
        <text>Release of a C-terminal amino acid, but little or no action with -Asp, -Glu, -Arg, -Lys or -Pro.</text>
        <dbReference type="EC" id="3.4.17.1"/>
    </reaction>
</comment>
<comment type="cofactor">
    <cofactor evidence="3">
        <name>Zn(2+)</name>
        <dbReference type="ChEBI" id="CHEBI:29105"/>
    </cofactor>
    <text evidence="3">Binds 1 zinc ion per subunit.</text>
</comment>
<comment type="subunit">
    <text evidence="3">Monomer.</text>
</comment>
<comment type="subcellular location">
    <subcellularLocation>
        <location evidence="5">Secreted</location>
    </subcellularLocation>
</comment>
<comment type="similarity">
    <text evidence="7">Belongs to the peptidase M14 family.</text>
</comment>
<evidence type="ECO:0000250" key="1"/>
<evidence type="ECO:0000250" key="2">
    <source>
        <dbReference type="UniProtKB" id="P00730"/>
    </source>
</evidence>
<evidence type="ECO:0000250" key="3">
    <source>
        <dbReference type="UniProtKB" id="P15085"/>
    </source>
</evidence>
<evidence type="ECO:0000250" key="4">
    <source>
        <dbReference type="UniProtKB" id="Q96IY4"/>
    </source>
</evidence>
<evidence type="ECO:0000250" key="5">
    <source>
        <dbReference type="UniProtKB" id="Q9UI42"/>
    </source>
</evidence>
<evidence type="ECO:0000255" key="6">
    <source>
        <dbReference type="PROSITE-ProRule" id="PRU01379"/>
    </source>
</evidence>
<evidence type="ECO:0000305" key="7"/>
<accession>Q7TPZ8</accession>
<dbReference type="EC" id="3.4.17.1" evidence="3"/>
<dbReference type="EMBL" id="BC052661">
    <property type="protein sequence ID" value="AAH52661.1"/>
    <property type="molecule type" value="mRNA"/>
</dbReference>
<dbReference type="CCDS" id="CCDS19977.1"/>
<dbReference type="RefSeq" id="NP_079626.2">
    <property type="nucleotide sequence ID" value="NM_025350.4"/>
</dbReference>
<dbReference type="SMR" id="Q7TPZ8"/>
<dbReference type="FunCoup" id="Q7TPZ8">
    <property type="interactions" value="180"/>
</dbReference>
<dbReference type="STRING" id="10090.ENSMUSP00000031806"/>
<dbReference type="MEROPS" id="M14.001"/>
<dbReference type="iPTMnet" id="Q7TPZ8"/>
<dbReference type="PhosphoSitePlus" id="Q7TPZ8"/>
<dbReference type="PaxDb" id="10090-ENSMUSP00000031806"/>
<dbReference type="ProteomicsDB" id="279930"/>
<dbReference type="Antibodypedia" id="17964">
    <property type="antibodies" value="619 antibodies from 39 providers"/>
</dbReference>
<dbReference type="DNASU" id="109697"/>
<dbReference type="Ensembl" id="ENSMUST00000031806.10">
    <property type="protein sequence ID" value="ENSMUSP00000031806.10"/>
    <property type="gene ID" value="ENSMUSG00000054446.9"/>
</dbReference>
<dbReference type="GeneID" id="109697"/>
<dbReference type="KEGG" id="mmu:109697"/>
<dbReference type="UCSC" id="uc009bfq.1">
    <property type="organism name" value="mouse"/>
</dbReference>
<dbReference type="AGR" id="MGI:88478"/>
<dbReference type="CTD" id="1357"/>
<dbReference type="MGI" id="MGI:88478">
    <property type="gene designation" value="Cpa1"/>
</dbReference>
<dbReference type="VEuPathDB" id="HostDB:ENSMUSG00000054446"/>
<dbReference type="eggNOG" id="KOG2650">
    <property type="taxonomic scope" value="Eukaryota"/>
</dbReference>
<dbReference type="GeneTree" id="ENSGT00940000158082"/>
<dbReference type="HOGENOM" id="CLU_019326_0_0_1"/>
<dbReference type="InParanoid" id="Q7TPZ8"/>
<dbReference type="OMA" id="MFAFHSQ"/>
<dbReference type="OrthoDB" id="3626597at2759"/>
<dbReference type="PhylomeDB" id="Q7TPZ8"/>
<dbReference type="TreeFam" id="TF317197"/>
<dbReference type="BioGRID-ORCS" id="109697">
    <property type="hits" value="0 hits in 77 CRISPR screens"/>
</dbReference>
<dbReference type="ChiTaRS" id="Cpa1">
    <property type="organism name" value="mouse"/>
</dbReference>
<dbReference type="PRO" id="PR:Q7TPZ8"/>
<dbReference type="Proteomes" id="UP000000589">
    <property type="component" value="Chromosome 6"/>
</dbReference>
<dbReference type="RNAct" id="Q7TPZ8">
    <property type="molecule type" value="protein"/>
</dbReference>
<dbReference type="Bgee" id="ENSMUSG00000054446">
    <property type="expression patterns" value="Expressed in pyloric antrum and 58 other cell types or tissues"/>
</dbReference>
<dbReference type="GO" id="GO:0005615">
    <property type="term" value="C:extracellular space"/>
    <property type="evidence" value="ECO:0007669"/>
    <property type="project" value="Ensembl"/>
</dbReference>
<dbReference type="GO" id="GO:0004181">
    <property type="term" value="F:metallocarboxypeptidase activity"/>
    <property type="evidence" value="ECO:0000250"/>
    <property type="project" value="UniProtKB"/>
</dbReference>
<dbReference type="GO" id="GO:0008270">
    <property type="term" value="F:zinc ion binding"/>
    <property type="evidence" value="ECO:0007669"/>
    <property type="project" value="InterPro"/>
</dbReference>
<dbReference type="GO" id="GO:0051603">
    <property type="term" value="P:proteolysis involved in protein catabolic process"/>
    <property type="evidence" value="ECO:0007669"/>
    <property type="project" value="Ensembl"/>
</dbReference>
<dbReference type="GO" id="GO:0046686">
    <property type="term" value="P:response to cadmium ion"/>
    <property type="evidence" value="ECO:0007669"/>
    <property type="project" value="Ensembl"/>
</dbReference>
<dbReference type="CDD" id="cd03870">
    <property type="entry name" value="M14_CPA"/>
    <property type="match status" value="1"/>
</dbReference>
<dbReference type="FunFam" id="3.40.630.10:FF:000132">
    <property type="entry name" value="Carboxypeptidase A1"/>
    <property type="match status" value="1"/>
</dbReference>
<dbReference type="FunFam" id="3.30.70.340:FF:000001">
    <property type="entry name" value="Carboxypeptidase A5"/>
    <property type="match status" value="1"/>
</dbReference>
<dbReference type="Gene3D" id="3.30.70.340">
    <property type="entry name" value="Metallocarboxypeptidase-like"/>
    <property type="match status" value="1"/>
</dbReference>
<dbReference type="Gene3D" id="3.40.630.10">
    <property type="entry name" value="Zn peptidases"/>
    <property type="match status" value="1"/>
</dbReference>
<dbReference type="InterPro" id="IPR034248">
    <property type="entry name" value="CPA_M14_CPD"/>
</dbReference>
<dbReference type="InterPro" id="IPR036990">
    <property type="entry name" value="M14A-like_propep"/>
</dbReference>
<dbReference type="InterPro" id="IPR003146">
    <property type="entry name" value="M14A_act_pep"/>
</dbReference>
<dbReference type="InterPro" id="IPR000834">
    <property type="entry name" value="Peptidase_M14"/>
</dbReference>
<dbReference type="PANTHER" id="PTHR11705:SF94">
    <property type="entry name" value="CARBOXYPEPTIDASE A1"/>
    <property type="match status" value="1"/>
</dbReference>
<dbReference type="PANTHER" id="PTHR11705">
    <property type="entry name" value="PROTEASE FAMILY M14 CARBOXYPEPTIDASE A,B"/>
    <property type="match status" value="1"/>
</dbReference>
<dbReference type="Pfam" id="PF00246">
    <property type="entry name" value="Peptidase_M14"/>
    <property type="match status" value="1"/>
</dbReference>
<dbReference type="Pfam" id="PF02244">
    <property type="entry name" value="Propep_M14"/>
    <property type="match status" value="1"/>
</dbReference>
<dbReference type="PRINTS" id="PR00765">
    <property type="entry name" value="CRBOXYPTASEA"/>
</dbReference>
<dbReference type="SMART" id="SM00631">
    <property type="entry name" value="Zn_pept"/>
    <property type="match status" value="1"/>
</dbReference>
<dbReference type="SUPFAM" id="SSF54897">
    <property type="entry name" value="Protease propeptides/inhibitors"/>
    <property type="match status" value="1"/>
</dbReference>
<dbReference type="SUPFAM" id="SSF53187">
    <property type="entry name" value="Zn-dependent exopeptidases"/>
    <property type="match status" value="1"/>
</dbReference>
<dbReference type="PROSITE" id="PS00132">
    <property type="entry name" value="CARBOXYPEPT_ZN_1"/>
    <property type="match status" value="1"/>
</dbReference>
<dbReference type="PROSITE" id="PS00133">
    <property type="entry name" value="CARBOXYPEPT_ZN_2"/>
    <property type="match status" value="1"/>
</dbReference>
<dbReference type="PROSITE" id="PS52035">
    <property type="entry name" value="PEPTIDASE_M14"/>
    <property type="match status" value="1"/>
</dbReference>
<reference key="1">
    <citation type="journal article" date="2004" name="Genome Res.">
        <title>The status, quality, and expansion of the NIH full-length cDNA project: the Mammalian Gene Collection (MGC).</title>
        <authorList>
            <consortium name="The MGC Project Team"/>
        </authorList>
    </citation>
    <scope>NUCLEOTIDE SEQUENCE [LARGE SCALE MRNA]</scope>
    <source>
        <strain>C57BL/6J</strain>
        <tissue>Egg</tissue>
    </source>
</reference>
<reference key="2">
    <citation type="journal article" date="2010" name="Cell">
        <title>A tissue-specific atlas of mouse protein phosphorylation and expression.</title>
        <authorList>
            <person name="Huttlin E.L."/>
            <person name="Jedrychowski M.P."/>
            <person name="Elias J.E."/>
            <person name="Goswami T."/>
            <person name="Rad R."/>
            <person name="Beausoleil S.A."/>
            <person name="Villen J."/>
            <person name="Haas W."/>
            <person name="Sowa M.E."/>
            <person name="Gygi S.P."/>
        </authorList>
    </citation>
    <scope>IDENTIFICATION BY MASS SPECTROMETRY [LARGE SCALE ANALYSIS]</scope>
    <source>
        <tissue>Lung</tissue>
        <tissue>Pancreas</tissue>
        <tissue>Spleen</tissue>
    </source>
</reference>
<organism>
    <name type="scientific">Mus musculus</name>
    <name type="common">Mouse</name>
    <dbReference type="NCBI Taxonomy" id="10090"/>
    <lineage>
        <taxon>Eukaryota</taxon>
        <taxon>Metazoa</taxon>
        <taxon>Chordata</taxon>
        <taxon>Craniata</taxon>
        <taxon>Vertebrata</taxon>
        <taxon>Euteleostomi</taxon>
        <taxon>Mammalia</taxon>
        <taxon>Eutheria</taxon>
        <taxon>Euarchontoglires</taxon>
        <taxon>Glires</taxon>
        <taxon>Rodentia</taxon>
        <taxon>Myomorpha</taxon>
        <taxon>Muroidea</taxon>
        <taxon>Muridae</taxon>
        <taxon>Murinae</taxon>
        <taxon>Mus</taxon>
        <taxon>Mus</taxon>
    </lineage>
</organism>
<proteinExistence type="evidence at protein level"/>
<feature type="signal peptide" evidence="1">
    <location>
        <begin position="1"/>
        <end position="16"/>
    </location>
</feature>
<feature type="propeptide" id="PRO_0000004347" description="Activation peptide">
    <location>
        <begin position="17"/>
        <end position="110"/>
    </location>
</feature>
<feature type="chain" id="PRO_0000004348" description="Carboxypeptidase A1">
    <location>
        <begin position="111"/>
        <end position="419"/>
    </location>
</feature>
<feature type="domain" description="Peptidase M14" evidence="6">
    <location>
        <begin position="121"/>
        <end position="414"/>
    </location>
</feature>
<feature type="active site" description="Proton donor/acceptor" evidence="6">
    <location>
        <position position="380"/>
    </location>
</feature>
<feature type="binding site" evidence="2">
    <location>
        <begin position="179"/>
        <end position="182"/>
    </location>
    <ligand>
        <name>substrate</name>
    </ligand>
</feature>
<feature type="binding site" evidence="6">
    <location>
        <position position="179"/>
    </location>
    <ligand>
        <name>Zn(2+)</name>
        <dbReference type="ChEBI" id="CHEBI:29105"/>
        <note>catalytic</note>
    </ligand>
</feature>
<feature type="binding site" evidence="6">
    <location>
        <position position="182"/>
    </location>
    <ligand>
        <name>Zn(2+)</name>
        <dbReference type="ChEBI" id="CHEBI:29105"/>
        <note>catalytic</note>
    </ligand>
</feature>
<feature type="binding site" evidence="2">
    <location>
        <position position="237"/>
    </location>
    <ligand>
        <name>substrate</name>
    </ligand>
</feature>
<feature type="binding site" evidence="2">
    <location>
        <begin position="254"/>
        <end position="255"/>
    </location>
    <ligand>
        <name>substrate</name>
    </ligand>
</feature>
<feature type="binding site" evidence="6">
    <location>
        <position position="306"/>
    </location>
    <ligand>
        <name>Zn(2+)</name>
        <dbReference type="ChEBI" id="CHEBI:29105"/>
        <note>catalytic</note>
    </ligand>
</feature>
<feature type="binding site" evidence="2">
    <location>
        <begin position="307"/>
        <end position="308"/>
    </location>
    <ligand>
        <name>substrate</name>
    </ligand>
</feature>
<feature type="binding site" evidence="2">
    <location>
        <position position="358"/>
    </location>
    <ligand>
        <name>substrate</name>
    </ligand>
</feature>
<feature type="disulfide bond" evidence="4">
    <location>
        <begin position="248"/>
        <end position="271"/>
    </location>
</feature>
<gene>
    <name type="primary">Cpa1</name>
</gene>
<sequence>MKRLLVLSVLLAAVFGNENFVGHQVLRISATDEAQVQKVRELEELEHLKLDFWRDPARAGLPIDVRVPFPTIQSVKAFLEYHDISYEIMIEDVQSLLDEEKQQMSAFQARALSTDAFNYATYHTLDEIYEFMDLLVTEHPQLVSKIQIGSTFEGRPINVLKFSTGGTNRPAIWIDTGIHSREWVTQASGVWFAKKITKDYGQEPTLTAILDNMDIFLEIVTNPDGFVYTHKTNRMWRKTRSHTEGSLCVGVDPNRNWDAAFGMPGASSNPCSETYRGKFPNSEVEVKSIVDFVTSHGNIKAFISIHSYSQLLLYPYGYTSEPAPDKEELDQLAKSAVTALTSLHGTKFKYGSIIDTIYQASGSTIDWTYSQGIKYSFTFELRDTGLRGFLLPASQIIPTAEETWLALLTIMDHTVKHPY</sequence>
<name>CBPA1_MOUSE</name>